<comment type="function">
    <text>Dispensable for transformability.</text>
</comment>
<comment type="cofactor">
    <cofactor evidence="1">
        <name>Zn(2+)</name>
        <dbReference type="ChEBI" id="CHEBI:29105"/>
    </cofactor>
</comment>
<comment type="similarity">
    <text evidence="3">Belongs to the cytidine and deoxycytidylate deaminase family.</text>
</comment>
<keyword id="KW-0378">Hydrolase</keyword>
<keyword id="KW-0479">Metal-binding</keyword>
<keyword id="KW-1185">Reference proteome</keyword>
<keyword id="KW-0862">Zinc</keyword>
<evidence type="ECO:0000250" key="1"/>
<evidence type="ECO:0000255" key="2">
    <source>
        <dbReference type="PROSITE-ProRule" id="PRU01083"/>
    </source>
</evidence>
<evidence type="ECO:0000305" key="3"/>
<feature type="chain" id="PRO_0000171703" description="ComE operon protein 2">
    <location>
        <begin position="1"/>
        <end position="189"/>
    </location>
</feature>
<feature type="domain" description="CMP/dCMP-type deaminase" evidence="2">
    <location>
        <begin position="5"/>
        <end position="132"/>
    </location>
</feature>
<feature type="active site" description="Proton donor" evidence="1">
    <location>
        <position position="72"/>
    </location>
</feature>
<feature type="binding site" evidence="1">
    <location>
        <position position="70"/>
    </location>
    <ligand>
        <name>Zn(2+)</name>
        <dbReference type="ChEBI" id="CHEBI:29105"/>
        <note>catalytic</note>
    </ligand>
</feature>
<feature type="binding site" evidence="1">
    <location>
        <position position="98"/>
    </location>
    <ligand>
        <name>Zn(2+)</name>
        <dbReference type="ChEBI" id="CHEBI:29105"/>
        <note>catalytic</note>
    </ligand>
</feature>
<feature type="binding site" evidence="1">
    <location>
        <position position="101"/>
    </location>
    <ligand>
        <name>Zn(2+)</name>
        <dbReference type="ChEBI" id="CHEBI:29105"/>
        <note>catalytic</note>
    </ligand>
</feature>
<organism>
    <name type="scientific">Bacillus subtilis (strain 168)</name>
    <dbReference type="NCBI Taxonomy" id="224308"/>
    <lineage>
        <taxon>Bacteria</taxon>
        <taxon>Bacillati</taxon>
        <taxon>Bacillota</taxon>
        <taxon>Bacilli</taxon>
        <taxon>Bacillales</taxon>
        <taxon>Bacillaceae</taxon>
        <taxon>Bacillus</taxon>
    </lineage>
</organism>
<accession>P32393</accession>
<proteinExistence type="inferred from homology"/>
<name>COMEB_BACSU</name>
<sequence length="189" mass="20969">MERISWNQYFMAQSHLLALRSTCPRLSVGATIVRDKRMIAGGYNGSIAGGVHCADEGCLMIDDHCARTIHAEMNAILQCSKFGVPTDGAEIYVTHYPCIQCCKSIIQAGIKTVYYAEDYKTHPYAQELFEQAGVTVEQVELDEMIVDLKNREKLSFVAGLIGKLADAGLAEEELKKIHEQANTLFTSYV</sequence>
<reference key="1">
    <citation type="journal article" date="1993" name="Mol. Microbiol.">
        <title>Characterization of comE, a late competence operon of Bacillus subtilis required for the binding and uptake of transforming DNA.</title>
        <authorList>
            <person name="Hahn J."/>
            <person name="Inamine G."/>
            <person name="Kozlov Y."/>
            <person name="Dubnau D.A."/>
        </authorList>
    </citation>
    <scope>NUCLEOTIDE SEQUENCE [GENOMIC DNA]</scope>
</reference>
<reference key="2">
    <citation type="journal article" date="1996" name="Microbiology">
        <title>Systematic sequencing of the 283 kb 210 degrees-232 degrees region of the Bacillus subtilis genome containing the skin element and many sporulation genes.</title>
        <authorList>
            <person name="Mizuno M."/>
            <person name="Masuda S."/>
            <person name="Takemaru K."/>
            <person name="Hosono S."/>
            <person name="Sato T."/>
            <person name="Takeuchi M."/>
            <person name="Kobayashi Y."/>
        </authorList>
    </citation>
    <scope>NUCLEOTIDE SEQUENCE [GENOMIC DNA]</scope>
    <source>
        <strain>168 / JH642</strain>
    </source>
</reference>
<reference key="3">
    <citation type="journal article" date="1997" name="Nature">
        <title>The complete genome sequence of the Gram-positive bacterium Bacillus subtilis.</title>
        <authorList>
            <person name="Kunst F."/>
            <person name="Ogasawara N."/>
            <person name="Moszer I."/>
            <person name="Albertini A.M."/>
            <person name="Alloni G."/>
            <person name="Azevedo V."/>
            <person name="Bertero M.G."/>
            <person name="Bessieres P."/>
            <person name="Bolotin A."/>
            <person name="Borchert S."/>
            <person name="Borriss R."/>
            <person name="Boursier L."/>
            <person name="Brans A."/>
            <person name="Braun M."/>
            <person name="Brignell S.C."/>
            <person name="Bron S."/>
            <person name="Brouillet S."/>
            <person name="Bruschi C.V."/>
            <person name="Caldwell B."/>
            <person name="Capuano V."/>
            <person name="Carter N.M."/>
            <person name="Choi S.-K."/>
            <person name="Codani J.-J."/>
            <person name="Connerton I.F."/>
            <person name="Cummings N.J."/>
            <person name="Daniel R.A."/>
            <person name="Denizot F."/>
            <person name="Devine K.M."/>
            <person name="Duesterhoeft A."/>
            <person name="Ehrlich S.D."/>
            <person name="Emmerson P.T."/>
            <person name="Entian K.-D."/>
            <person name="Errington J."/>
            <person name="Fabret C."/>
            <person name="Ferrari E."/>
            <person name="Foulger D."/>
            <person name="Fritz C."/>
            <person name="Fujita M."/>
            <person name="Fujita Y."/>
            <person name="Fuma S."/>
            <person name="Galizzi A."/>
            <person name="Galleron N."/>
            <person name="Ghim S.-Y."/>
            <person name="Glaser P."/>
            <person name="Goffeau A."/>
            <person name="Golightly E.J."/>
            <person name="Grandi G."/>
            <person name="Guiseppi G."/>
            <person name="Guy B.J."/>
            <person name="Haga K."/>
            <person name="Haiech J."/>
            <person name="Harwood C.R."/>
            <person name="Henaut A."/>
            <person name="Hilbert H."/>
            <person name="Holsappel S."/>
            <person name="Hosono S."/>
            <person name="Hullo M.-F."/>
            <person name="Itaya M."/>
            <person name="Jones L.-M."/>
            <person name="Joris B."/>
            <person name="Karamata D."/>
            <person name="Kasahara Y."/>
            <person name="Klaerr-Blanchard M."/>
            <person name="Klein C."/>
            <person name="Kobayashi Y."/>
            <person name="Koetter P."/>
            <person name="Koningstein G."/>
            <person name="Krogh S."/>
            <person name="Kumano M."/>
            <person name="Kurita K."/>
            <person name="Lapidus A."/>
            <person name="Lardinois S."/>
            <person name="Lauber J."/>
            <person name="Lazarevic V."/>
            <person name="Lee S.-M."/>
            <person name="Levine A."/>
            <person name="Liu H."/>
            <person name="Masuda S."/>
            <person name="Mauel C."/>
            <person name="Medigue C."/>
            <person name="Medina N."/>
            <person name="Mellado R.P."/>
            <person name="Mizuno M."/>
            <person name="Moestl D."/>
            <person name="Nakai S."/>
            <person name="Noback M."/>
            <person name="Noone D."/>
            <person name="O'Reilly M."/>
            <person name="Ogawa K."/>
            <person name="Ogiwara A."/>
            <person name="Oudega B."/>
            <person name="Park S.-H."/>
            <person name="Parro V."/>
            <person name="Pohl T.M."/>
            <person name="Portetelle D."/>
            <person name="Porwollik S."/>
            <person name="Prescott A.M."/>
            <person name="Presecan E."/>
            <person name="Pujic P."/>
            <person name="Purnelle B."/>
            <person name="Rapoport G."/>
            <person name="Rey M."/>
            <person name="Reynolds S."/>
            <person name="Rieger M."/>
            <person name="Rivolta C."/>
            <person name="Rocha E."/>
            <person name="Roche B."/>
            <person name="Rose M."/>
            <person name="Sadaie Y."/>
            <person name="Sato T."/>
            <person name="Scanlan E."/>
            <person name="Schleich S."/>
            <person name="Schroeter R."/>
            <person name="Scoffone F."/>
            <person name="Sekiguchi J."/>
            <person name="Sekowska A."/>
            <person name="Seror S.J."/>
            <person name="Serror P."/>
            <person name="Shin B.-S."/>
            <person name="Soldo B."/>
            <person name="Sorokin A."/>
            <person name="Tacconi E."/>
            <person name="Takagi T."/>
            <person name="Takahashi H."/>
            <person name="Takemaru K."/>
            <person name="Takeuchi M."/>
            <person name="Tamakoshi A."/>
            <person name="Tanaka T."/>
            <person name="Terpstra P."/>
            <person name="Tognoni A."/>
            <person name="Tosato V."/>
            <person name="Uchiyama S."/>
            <person name="Vandenbol M."/>
            <person name="Vannier F."/>
            <person name="Vassarotti A."/>
            <person name="Viari A."/>
            <person name="Wambutt R."/>
            <person name="Wedler E."/>
            <person name="Wedler H."/>
            <person name="Weitzenegger T."/>
            <person name="Winters P."/>
            <person name="Wipat A."/>
            <person name="Yamamoto H."/>
            <person name="Yamane K."/>
            <person name="Yasumoto K."/>
            <person name="Yata K."/>
            <person name="Yoshida K."/>
            <person name="Yoshikawa H.-F."/>
            <person name="Zumstein E."/>
            <person name="Yoshikawa H."/>
            <person name="Danchin A."/>
        </authorList>
    </citation>
    <scope>NUCLEOTIDE SEQUENCE [LARGE SCALE GENOMIC DNA]</scope>
    <source>
        <strain>168</strain>
    </source>
</reference>
<dbReference type="EC" id="3.5.-.-"/>
<dbReference type="EMBL" id="L15202">
    <property type="protein sequence ID" value="AAC36906.1"/>
    <property type="molecule type" value="Unassigned_DNA"/>
</dbReference>
<dbReference type="EMBL" id="D84432">
    <property type="protein sequence ID" value="BAA12453.1"/>
    <property type="molecule type" value="Genomic_DNA"/>
</dbReference>
<dbReference type="EMBL" id="AL009126">
    <property type="protein sequence ID" value="CAB14500.1"/>
    <property type="molecule type" value="Genomic_DNA"/>
</dbReference>
<dbReference type="PIR" id="S39864">
    <property type="entry name" value="S39864"/>
</dbReference>
<dbReference type="RefSeq" id="NP_390436.1">
    <property type="nucleotide sequence ID" value="NC_000964.3"/>
</dbReference>
<dbReference type="RefSeq" id="WP_003229978.1">
    <property type="nucleotide sequence ID" value="NZ_OZ025638.1"/>
</dbReference>
<dbReference type="SMR" id="P32393"/>
<dbReference type="FunCoup" id="P32393">
    <property type="interactions" value="237"/>
</dbReference>
<dbReference type="STRING" id="224308.BSU25580"/>
<dbReference type="PaxDb" id="224308-BSU25580"/>
<dbReference type="DNASU" id="937832"/>
<dbReference type="EnsemblBacteria" id="CAB14500">
    <property type="protein sequence ID" value="CAB14500"/>
    <property type="gene ID" value="BSU_25580"/>
</dbReference>
<dbReference type="GeneID" id="937832"/>
<dbReference type="KEGG" id="bsu:BSU25580"/>
<dbReference type="PATRIC" id="fig|224308.179.peg.2781"/>
<dbReference type="eggNOG" id="COG2131">
    <property type="taxonomic scope" value="Bacteria"/>
</dbReference>
<dbReference type="InParanoid" id="P32393"/>
<dbReference type="OrthoDB" id="9788517at2"/>
<dbReference type="PhylomeDB" id="P32393"/>
<dbReference type="BioCyc" id="BSUB:BSU25580-MONOMER"/>
<dbReference type="Proteomes" id="UP000001570">
    <property type="component" value="Chromosome"/>
</dbReference>
<dbReference type="GO" id="GO:0005737">
    <property type="term" value="C:cytoplasm"/>
    <property type="evidence" value="ECO:0000318"/>
    <property type="project" value="GO_Central"/>
</dbReference>
<dbReference type="GO" id="GO:0004132">
    <property type="term" value="F:dCMP deaminase activity"/>
    <property type="evidence" value="ECO:0000318"/>
    <property type="project" value="GO_Central"/>
</dbReference>
<dbReference type="GO" id="GO:0008270">
    <property type="term" value="F:zinc ion binding"/>
    <property type="evidence" value="ECO:0007669"/>
    <property type="project" value="InterPro"/>
</dbReference>
<dbReference type="GO" id="GO:0009972">
    <property type="term" value="P:cytidine deamination"/>
    <property type="evidence" value="ECO:0000318"/>
    <property type="project" value="GO_Central"/>
</dbReference>
<dbReference type="CDD" id="cd01286">
    <property type="entry name" value="deoxycytidylate_deaminase"/>
    <property type="match status" value="1"/>
</dbReference>
<dbReference type="Gene3D" id="3.40.140.10">
    <property type="entry name" value="Cytidine Deaminase, domain 2"/>
    <property type="match status" value="1"/>
</dbReference>
<dbReference type="InterPro" id="IPR016192">
    <property type="entry name" value="APOBEC/CMP_deaminase_Zn-bd"/>
</dbReference>
<dbReference type="InterPro" id="IPR002125">
    <property type="entry name" value="CMP_dCMP_dom"/>
</dbReference>
<dbReference type="InterPro" id="IPR013404">
    <property type="entry name" value="Competence_ComEB"/>
</dbReference>
<dbReference type="InterPro" id="IPR016193">
    <property type="entry name" value="Cytidine_deaminase-like"/>
</dbReference>
<dbReference type="InterPro" id="IPR015517">
    <property type="entry name" value="dCMP_deaminase-rel"/>
</dbReference>
<dbReference type="InterPro" id="IPR035105">
    <property type="entry name" value="Deoxycytidylate_deaminase_dom"/>
</dbReference>
<dbReference type="NCBIfam" id="TIGR02571">
    <property type="entry name" value="ComEB"/>
    <property type="match status" value="1"/>
</dbReference>
<dbReference type="PANTHER" id="PTHR11086:SF18">
    <property type="entry name" value="DEOXYCYTIDYLATE DEAMINASE"/>
    <property type="match status" value="1"/>
</dbReference>
<dbReference type="PANTHER" id="PTHR11086">
    <property type="entry name" value="DEOXYCYTIDYLATE DEAMINASE-RELATED"/>
    <property type="match status" value="1"/>
</dbReference>
<dbReference type="Pfam" id="PF00383">
    <property type="entry name" value="dCMP_cyt_deam_1"/>
    <property type="match status" value="1"/>
</dbReference>
<dbReference type="SUPFAM" id="SSF53927">
    <property type="entry name" value="Cytidine deaminase-like"/>
    <property type="match status" value="1"/>
</dbReference>
<dbReference type="PROSITE" id="PS00903">
    <property type="entry name" value="CYT_DCMP_DEAMINASES_1"/>
    <property type="match status" value="1"/>
</dbReference>
<dbReference type="PROSITE" id="PS51747">
    <property type="entry name" value="CYT_DCMP_DEAMINASES_2"/>
    <property type="match status" value="1"/>
</dbReference>
<protein>
    <recommendedName>
        <fullName>ComE operon protein 2</fullName>
        <ecNumber>3.5.-.-</ecNumber>
    </recommendedName>
</protein>
<gene>
    <name type="primary">comEB</name>
    <name type="synonym">comE2</name>
    <name type="ordered locus">BSU25580</name>
</gene>